<feature type="chain" id="PRO_0000115367" description="Small ribosomal subunit protein uS15">
    <location>
        <begin position="1"/>
        <end position="89"/>
    </location>
</feature>
<evidence type="ECO:0000255" key="1">
    <source>
        <dbReference type="HAMAP-Rule" id="MF_01343"/>
    </source>
</evidence>
<evidence type="ECO:0000305" key="2"/>
<accession>Q6FF13</accession>
<name>RS15_ACIAD</name>
<gene>
    <name evidence="1" type="primary">rpsO</name>
    <name type="ordered locus">ACIAD0401</name>
</gene>
<keyword id="KW-0687">Ribonucleoprotein</keyword>
<keyword id="KW-0689">Ribosomal protein</keyword>
<keyword id="KW-0694">RNA-binding</keyword>
<keyword id="KW-0699">rRNA-binding</keyword>
<proteinExistence type="inferred from homology"/>
<reference key="1">
    <citation type="journal article" date="2004" name="Nucleic Acids Res.">
        <title>Unique features revealed by the genome sequence of Acinetobacter sp. ADP1, a versatile and naturally transformation competent bacterium.</title>
        <authorList>
            <person name="Barbe V."/>
            <person name="Vallenet D."/>
            <person name="Fonknechten N."/>
            <person name="Kreimeyer A."/>
            <person name="Oztas S."/>
            <person name="Labarre L."/>
            <person name="Cruveiller S."/>
            <person name="Robert C."/>
            <person name="Duprat S."/>
            <person name="Wincker P."/>
            <person name="Ornston L.N."/>
            <person name="Weissenbach J."/>
            <person name="Marliere P."/>
            <person name="Cohen G.N."/>
            <person name="Medigue C."/>
        </authorList>
    </citation>
    <scope>NUCLEOTIDE SEQUENCE [LARGE SCALE GENOMIC DNA]</scope>
    <source>
        <strain>ATCC 33305 / BD413 / ADP1</strain>
    </source>
</reference>
<protein>
    <recommendedName>
        <fullName evidence="1">Small ribosomal subunit protein uS15</fullName>
    </recommendedName>
    <alternativeName>
        <fullName evidence="2">30S ribosomal protein S15</fullName>
    </alternativeName>
</protein>
<dbReference type="EMBL" id="CR543861">
    <property type="protein sequence ID" value="CAG67345.1"/>
    <property type="molecule type" value="Genomic_DNA"/>
</dbReference>
<dbReference type="RefSeq" id="WP_004920392.1">
    <property type="nucleotide sequence ID" value="NC_005966.1"/>
</dbReference>
<dbReference type="SMR" id="Q6FF13"/>
<dbReference type="STRING" id="202950.GCA_001485005_00659"/>
<dbReference type="GeneID" id="67512280"/>
<dbReference type="KEGG" id="aci:ACIAD0401"/>
<dbReference type="eggNOG" id="COG0184">
    <property type="taxonomic scope" value="Bacteria"/>
</dbReference>
<dbReference type="HOGENOM" id="CLU_148518_0_0_6"/>
<dbReference type="OrthoDB" id="9799262at2"/>
<dbReference type="BioCyc" id="ASP62977:ACIAD_RS01860-MONOMER"/>
<dbReference type="Proteomes" id="UP000000430">
    <property type="component" value="Chromosome"/>
</dbReference>
<dbReference type="GO" id="GO:0022627">
    <property type="term" value="C:cytosolic small ribosomal subunit"/>
    <property type="evidence" value="ECO:0007669"/>
    <property type="project" value="TreeGrafter"/>
</dbReference>
<dbReference type="GO" id="GO:0019843">
    <property type="term" value="F:rRNA binding"/>
    <property type="evidence" value="ECO:0007669"/>
    <property type="project" value="UniProtKB-UniRule"/>
</dbReference>
<dbReference type="GO" id="GO:0003735">
    <property type="term" value="F:structural constituent of ribosome"/>
    <property type="evidence" value="ECO:0007669"/>
    <property type="project" value="InterPro"/>
</dbReference>
<dbReference type="GO" id="GO:0006412">
    <property type="term" value="P:translation"/>
    <property type="evidence" value="ECO:0007669"/>
    <property type="project" value="UniProtKB-UniRule"/>
</dbReference>
<dbReference type="CDD" id="cd00353">
    <property type="entry name" value="Ribosomal_S15p_S13e"/>
    <property type="match status" value="1"/>
</dbReference>
<dbReference type="FunFam" id="1.10.287.10:FF:000002">
    <property type="entry name" value="30S ribosomal protein S15"/>
    <property type="match status" value="1"/>
</dbReference>
<dbReference type="Gene3D" id="6.10.250.3130">
    <property type="match status" value="1"/>
</dbReference>
<dbReference type="Gene3D" id="1.10.287.10">
    <property type="entry name" value="S15/NS1, RNA-binding"/>
    <property type="match status" value="1"/>
</dbReference>
<dbReference type="HAMAP" id="MF_01343_B">
    <property type="entry name" value="Ribosomal_uS15_B"/>
    <property type="match status" value="1"/>
</dbReference>
<dbReference type="InterPro" id="IPR000589">
    <property type="entry name" value="Ribosomal_uS15"/>
</dbReference>
<dbReference type="InterPro" id="IPR005290">
    <property type="entry name" value="Ribosomal_uS15_bac-type"/>
</dbReference>
<dbReference type="InterPro" id="IPR009068">
    <property type="entry name" value="uS15_NS1_RNA-bd_sf"/>
</dbReference>
<dbReference type="NCBIfam" id="TIGR00952">
    <property type="entry name" value="S15_bact"/>
    <property type="match status" value="1"/>
</dbReference>
<dbReference type="PANTHER" id="PTHR23321">
    <property type="entry name" value="RIBOSOMAL PROTEIN S15, BACTERIAL AND ORGANELLAR"/>
    <property type="match status" value="1"/>
</dbReference>
<dbReference type="PANTHER" id="PTHR23321:SF26">
    <property type="entry name" value="SMALL RIBOSOMAL SUBUNIT PROTEIN US15M"/>
    <property type="match status" value="1"/>
</dbReference>
<dbReference type="Pfam" id="PF00312">
    <property type="entry name" value="Ribosomal_S15"/>
    <property type="match status" value="1"/>
</dbReference>
<dbReference type="SMART" id="SM01387">
    <property type="entry name" value="Ribosomal_S15"/>
    <property type="match status" value="1"/>
</dbReference>
<dbReference type="SUPFAM" id="SSF47060">
    <property type="entry name" value="S15/NS1 RNA-binding domain"/>
    <property type="match status" value="1"/>
</dbReference>
<dbReference type="PROSITE" id="PS00362">
    <property type="entry name" value="RIBOSOMAL_S15"/>
    <property type="match status" value="1"/>
</dbReference>
<comment type="function">
    <text evidence="1">One of the primary rRNA binding proteins, it binds directly to 16S rRNA where it helps nucleate assembly of the platform of the 30S subunit by binding and bridging several RNA helices of the 16S rRNA.</text>
</comment>
<comment type="function">
    <text evidence="1">Forms an intersubunit bridge (bridge B4) with the 23S rRNA of the 50S subunit in the ribosome.</text>
</comment>
<comment type="subunit">
    <text evidence="1">Part of the 30S ribosomal subunit. Forms a bridge to the 50S subunit in the 70S ribosome, contacting the 23S rRNA.</text>
</comment>
<comment type="similarity">
    <text evidence="1">Belongs to the universal ribosomal protein uS15 family.</text>
</comment>
<organism>
    <name type="scientific">Acinetobacter baylyi (strain ATCC 33305 / BD413 / ADP1)</name>
    <dbReference type="NCBI Taxonomy" id="62977"/>
    <lineage>
        <taxon>Bacteria</taxon>
        <taxon>Pseudomonadati</taxon>
        <taxon>Pseudomonadota</taxon>
        <taxon>Gammaproteobacteria</taxon>
        <taxon>Moraxellales</taxon>
        <taxon>Moraxellaceae</taxon>
        <taxon>Acinetobacter</taxon>
    </lineage>
</organism>
<sequence>MALTNADRAAIIAKFARAENDTGSPEVQVALLTAQINDLQGHFKEHKHDHHSRRGLIRMVNQRRKLLDYLNGKDHGRYVSLIGELGLRR</sequence>